<comment type="function">
    <text evidence="1">Forms part of the ribosomal stalk which helps the ribosome interact with GTP-bound translation factors.</text>
</comment>
<comment type="subunit">
    <text evidence="1">Part of the ribosomal stalk of the 50S ribosomal subunit. Interacts with L10 and the large rRNA to form the base of the stalk. L10 forms an elongated spine to which L12 dimers bind in a sequential fashion forming a multimeric L10(L12)X complex.</text>
</comment>
<comment type="PTM">
    <text evidence="1">One or more lysine residues are methylated.</text>
</comment>
<comment type="similarity">
    <text evidence="1">Belongs to the universal ribosomal protein uL11 family.</text>
</comment>
<feature type="chain" id="PRO_1000046152" description="Large ribosomal subunit protein uL11">
    <location>
        <begin position="1"/>
        <end position="143"/>
    </location>
</feature>
<evidence type="ECO:0000255" key="1">
    <source>
        <dbReference type="HAMAP-Rule" id="MF_00736"/>
    </source>
</evidence>
<evidence type="ECO:0000305" key="2"/>
<dbReference type="EMBL" id="CP000546">
    <property type="protein sequence ID" value="ABN03556.1"/>
    <property type="molecule type" value="Genomic_DNA"/>
</dbReference>
<dbReference type="RefSeq" id="WP_004198368.1">
    <property type="nucleotide sequence ID" value="NC_008836.1"/>
</dbReference>
<dbReference type="SMR" id="A2S7G2"/>
<dbReference type="GeneID" id="93061845"/>
<dbReference type="KEGG" id="bml:BMA10229_A1910"/>
<dbReference type="HOGENOM" id="CLU_074237_2_0_4"/>
<dbReference type="Proteomes" id="UP000002283">
    <property type="component" value="Chromosome I"/>
</dbReference>
<dbReference type="GO" id="GO:0022625">
    <property type="term" value="C:cytosolic large ribosomal subunit"/>
    <property type="evidence" value="ECO:0007669"/>
    <property type="project" value="TreeGrafter"/>
</dbReference>
<dbReference type="GO" id="GO:0070180">
    <property type="term" value="F:large ribosomal subunit rRNA binding"/>
    <property type="evidence" value="ECO:0007669"/>
    <property type="project" value="UniProtKB-UniRule"/>
</dbReference>
<dbReference type="GO" id="GO:0003735">
    <property type="term" value="F:structural constituent of ribosome"/>
    <property type="evidence" value="ECO:0007669"/>
    <property type="project" value="InterPro"/>
</dbReference>
<dbReference type="GO" id="GO:0006412">
    <property type="term" value="P:translation"/>
    <property type="evidence" value="ECO:0007669"/>
    <property type="project" value="UniProtKB-UniRule"/>
</dbReference>
<dbReference type="CDD" id="cd00349">
    <property type="entry name" value="Ribosomal_L11"/>
    <property type="match status" value="1"/>
</dbReference>
<dbReference type="FunFam" id="1.10.10.250:FF:000001">
    <property type="entry name" value="50S ribosomal protein L11"/>
    <property type="match status" value="1"/>
</dbReference>
<dbReference type="FunFam" id="3.30.1550.10:FF:000001">
    <property type="entry name" value="50S ribosomal protein L11"/>
    <property type="match status" value="1"/>
</dbReference>
<dbReference type="Gene3D" id="1.10.10.250">
    <property type="entry name" value="Ribosomal protein L11, C-terminal domain"/>
    <property type="match status" value="1"/>
</dbReference>
<dbReference type="Gene3D" id="3.30.1550.10">
    <property type="entry name" value="Ribosomal protein L11/L12, N-terminal domain"/>
    <property type="match status" value="1"/>
</dbReference>
<dbReference type="HAMAP" id="MF_00736">
    <property type="entry name" value="Ribosomal_uL11"/>
    <property type="match status" value="1"/>
</dbReference>
<dbReference type="InterPro" id="IPR000911">
    <property type="entry name" value="Ribosomal_uL11"/>
</dbReference>
<dbReference type="InterPro" id="IPR006519">
    <property type="entry name" value="Ribosomal_uL11_bac-typ"/>
</dbReference>
<dbReference type="InterPro" id="IPR020783">
    <property type="entry name" value="Ribosomal_uL11_C"/>
</dbReference>
<dbReference type="InterPro" id="IPR036769">
    <property type="entry name" value="Ribosomal_uL11_C_sf"/>
</dbReference>
<dbReference type="InterPro" id="IPR020785">
    <property type="entry name" value="Ribosomal_uL11_CS"/>
</dbReference>
<dbReference type="InterPro" id="IPR020784">
    <property type="entry name" value="Ribosomal_uL11_N"/>
</dbReference>
<dbReference type="InterPro" id="IPR036796">
    <property type="entry name" value="Ribosomal_uL11_N_sf"/>
</dbReference>
<dbReference type="NCBIfam" id="TIGR01632">
    <property type="entry name" value="L11_bact"/>
    <property type="match status" value="1"/>
</dbReference>
<dbReference type="PANTHER" id="PTHR11661">
    <property type="entry name" value="60S RIBOSOMAL PROTEIN L12"/>
    <property type="match status" value="1"/>
</dbReference>
<dbReference type="PANTHER" id="PTHR11661:SF1">
    <property type="entry name" value="LARGE RIBOSOMAL SUBUNIT PROTEIN UL11M"/>
    <property type="match status" value="1"/>
</dbReference>
<dbReference type="Pfam" id="PF00298">
    <property type="entry name" value="Ribosomal_L11"/>
    <property type="match status" value="1"/>
</dbReference>
<dbReference type="Pfam" id="PF03946">
    <property type="entry name" value="Ribosomal_L11_N"/>
    <property type="match status" value="1"/>
</dbReference>
<dbReference type="SMART" id="SM00649">
    <property type="entry name" value="RL11"/>
    <property type="match status" value="1"/>
</dbReference>
<dbReference type="SUPFAM" id="SSF54747">
    <property type="entry name" value="Ribosomal L11/L12e N-terminal domain"/>
    <property type="match status" value="1"/>
</dbReference>
<dbReference type="SUPFAM" id="SSF46906">
    <property type="entry name" value="Ribosomal protein L11, C-terminal domain"/>
    <property type="match status" value="1"/>
</dbReference>
<dbReference type="PROSITE" id="PS00359">
    <property type="entry name" value="RIBOSOMAL_L11"/>
    <property type="match status" value="1"/>
</dbReference>
<name>RL11_BURM9</name>
<sequence length="143" mass="14959">MAKKIVGFIKLQIPAGKANPSPPVGPALGQRGLNIMEFCKAFNAQTQGMEPGLPVPVVITAYADKSFTFVMKTPPATVLIKKAAKVDKGSSKPHTDKVGKITRAQAEEIAKTKMPDLTAADLDAAVRTIAGSARSMGITVEGV</sequence>
<keyword id="KW-0488">Methylation</keyword>
<keyword id="KW-0687">Ribonucleoprotein</keyword>
<keyword id="KW-0689">Ribosomal protein</keyword>
<keyword id="KW-0694">RNA-binding</keyword>
<keyword id="KW-0699">rRNA-binding</keyword>
<organism>
    <name type="scientific">Burkholderia mallei (strain NCTC 10229)</name>
    <dbReference type="NCBI Taxonomy" id="412022"/>
    <lineage>
        <taxon>Bacteria</taxon>
        <taxon>Pseudomonadati</taxon>
        <taxon>Pseudomonadota</taxon>
        <taxon>Betaproteobacteria</taxon>
        <taxon>Burkholderiales</taxon>
        <taxon>Burkholderiaceae</taxon>
        <taxon>Burkholderia</taxon>
        <taxon>pseudomallei group</taxon>
    </lineage>
</organism>
<gene>
    <name evidence="1" type="primary">rplK</name>
    <name type="ordered locus">BMA10229_A1910</name>
</gene>
<proteinExistence type="inferred from homology"/>
<accession>A2S7G2</accession>
<protein>
    <recommendedName>
        <fullName evidence="1">Large ribosomal subunit protein uL11</fullName>
    </recommendedName>
    <alternativeName>
        <fullName evidence="2">50S ribosomal protein L11</fullName>
    </alternativeName>
</protein>
<reference key="1">
    <citation type="journal article" date="2010" name="Genome Biol. Evol.">
        <title>Continuing evolution of Burkholderia mallei through genome reduction and large-scale rearrangements.</title>
        <authorList>
            <person name="Losada L."/>
            <person name="Ronning C.M."/>
            <person name="DeShazer D."/>
            <person name="Woods D."/>
            <person name="Fedorova N."/>
            <person name="Kim H.S."/>
            <person name="Shabalina S.A."/>
            <person name="Pearson T.R."/>
            <person name="Brinkac L."/>
            <person name="Tan P."/>
            <person name="Nandi T."/>
            <person name="Crabtree J."/>
            <person name="Badger J."/>
            <person name="Beckstrom-Sternberg S."/>
            <person name="Saqib M."/>
            <person name="Schutzer S.E."/>
            <person name="Keim P."/>
            <person name="Nierman W.C."/>
        </authorList>
    </citation>
    <scope>NUCLEOTIDE SEQUENCE [LARGE SCALE GENOMIC DNA]</scope>
    <source>
        <strain>NCTC 10229</strain>
    </source>
</reference>